<dbReference type="EC" id="1.11.1.20" evidence="3"/>
<dbReference type="EMBL" id="AB329665">
    <property type="protein sequence ID" value="BAF96021.1"/>
    <property type="molecule type" value="mRNA"/>
</dbReference>
<dbReference type="RefSeq" id="NP_001106912.1">
    <property type="nucleotide sequence ID" value="NM_001113441.1"/>
</dbReference>
<dbReference type="FunCoup" id="A9CQL8">
    <property type="interactions" value="977"/>
</dbReference>
<dbReference type="STRING" id="9823.ENSSSCP00000023293"/>
<dbReference type="SwissLipids" id="SLP:000001102"/>
<dbReference type="PaxDb" id="9823-ENSSSCP00000023293"/>
<dbReference type="PeptideAtlas" id="A9CQL8"/>
<dbReference type="Ensembl" id="ENSSSCT00000028536.3">
    <property type="protein sequence ID" value="ENSSSCP00000023293.2"/>
    <property type="gene ID" value="ENSSSCG00000026554.3"/>
</dbReference>
<dbReference type="Ensembl" id="ENSSSCT00105046120">
    <property type="protein sequence ID" value="ENSSSCP00105032092"/>
    <property type="gene ID" value="ENSSSCG00105024403"/>
</dbReference>
<dbReference type="GeneID" id="100134955"/>
<dbReference type="KEGG" id="ssc:100134955"/>
<dbReference type="CTD" id="127281"/>
<dbReference type="VGNC" id="VGNC:98543">
    <property type="gene designation" value="PRXL2B"/>
</dbReference>
<dbReference type="eggNOG" id="KOG4498">
    <property type="taxonomic scope" value="Eukaryota"/>
</dbReference>
<dbReference type="GeneTree" id="ENSGT00940000162566"/>
<dbReference type="InParanoid" id="A9CQL8"/>
<dbReference type="OMA" id="QRPVCND"/>
<dbReference type="OrthoDB" id="40334at2759"/>
<dbReference type="BRENDA" id="1.1.1.188">
    <property type="organism ID" value="6170"/>
</dbReference>
<dbReference type="BRENDA" id="1.11.1.20">
    <property type="organism ID" value="6170"/>
</dbReference>
<dbReference type="SABIO-RK" id="A9CQL8"/>
<dbReference type="Proteomes" id="UP000008227">
    <property type="component" value="Chromosome 6"/>
</dbReference>
<dbReference type="Proteomes" id="UP000314985">
    <property type="component" value="Unplaced"/>
</dbReference>
<dbReference type="Proteomes" id="UP000694570">
    <property type="component" value="Unplaced"/>
</dbReference>
<dbReference type="Proteomes" id="UP000694571">
    <property type="component" value="Unplaced"/>
</dbReference>
<dbReference type="Proteomes" id="UP000694720">
    <property type="component" value="Unplaced"/>
</dbReference>
<dbReference type="Proteomes" id="UP000694722">
    <property type="component" value="Unplaced"/>
</dbReference>
<dbReference type="Proteomes" id="UP000694723">
    <property type="component" value="Unplaced"/>
</dbReference>
<dbReference type="Proteomes" id="UP000694724">
    <property type="component" value="Unplaced"/>
</dbReference>
<dbReference type="Proteomes" id="UP000694725">
    <property type="component" value="Unplaced"/>
</dbReference>
<dbReference type="Proteomes" id="UP000694726">
    <property type="component" value="Unplaced"/>
</dbReference>
<dbReference type="Proteomes" id="UP000694727">
    <property type="component" value="Unplaced"/>
</dbReference>
<dbReference type="Proteomes" id="UP000694728">
    <property type="component" value="Unplaced"/>
</dbReference>
<dbReference type="Bgee" id="ENSSSCG00000026554">
    <property type="expression patterns" value="Expressed in longissimus lumborum muscle and 43 other cell types or tissues"/>
</dbReference>
<dbReference type="ExpressionAtlas" id="A9CQL8">
    <property type="expression patterns" value="baseline and differential"/>
</dbReference>
<dbReference type="GO" id="GO:0005737">
    <property type="term" value="C:cytoplasm"/>
    <property type="evidence" value="ECO:0000250"/>
    <property type="project" value="CAFA"/>
</dbReference>
<dbReference type="GO" id="GO:0005829">
    <property type="term" value="C:cytosol"/>
    <property type="evidence" value="ECO:0000314"/>
    <property type="project" value="UniProtKB"/>
</dbReference>
<dbReference type="GO" id="GO:0005783">
    <property type="term" value="C:endoplasmic reticulum"/>
    <property type="evidence" value="ECO:0000250"/>
    <property type="project" value="CAFA"/>
</dbReference>
<dbReference type="GO" id="GO:0043209">
    <property type="term" value="C:myelin sheath"/>
    <property type="evidence" value="ECO:0000250"/>
    <property type="project" value="CAFA"/>
</dbReference>
<dbReference type="GO" id="GO:0016616">
    <property type="term" value="F:oxidoreductase activity, acting on the CH-OH group of donors, NAD or NADP as acceptor"/>
    <property type="evidence" value="ECO:0000314"/>
    <property type="project" value="UniProtKB"/>
</dbReference>
<dbReference type="GO" id="GO:0047017">
    <property type="term" value="F:prostaglandin F synthase activity"/>
    <property type="evidence" value="ECO:0000314"/>
    <property type="project" value="UniProtKB"/>
</dbReference>
<dbReference type="GO" id="GO:0001516">
    <property type="term" value="P:prostaglandin biosynthetic process"/>
    <property type="evidence" value="ECO:0000314"/>
    <property type="project" value="UniProtKB"/>
</dbReference>
<dbReference type="CDD" id="cd02970">
    <property type="entry name" value="PRX_like2"/>
    <property type="match status" value="1"/>
</dbReference>
<dbReference type="FunFam" id="3.40.30.10:FF:000243">
    <property type="entry name" value="Prostamide/prostaglandin F synthase"/>
    <property type="match status" value="1"/>
</dbReference>
<dbReference type="InterPro" id="IPR032801">
    <property type="entry name" value="PXL2A/B/C"/>
</dbReference>
<dbReference type="InterPro" id="IPR036249">
    <property type="entry name" value="Thioredoxin-like_sf"/>
</dbReference>
<dbReference type="PANTHER" id="PTHR28630">
    <property type="match status" value="1"/>
</dbReference>
<dbReference type="PANTHER" id="PTHR28630:SF29">
    <property type="entry name" value="PROSTAMIDE_PROSTAGLANDIN F SYNTHASE"/>
    <property type="match status" value="1"/>
</dbReference>
<dbReference type="Pfam" id="PF13911">
    <property type="entry name" value="AhpC-TSA_2"/>
    <property type="match status" value="1"/>
</dbReference>
<dbReference type="SUPFAM" id="SSF52833">
    <property type="entry name" value="Thioredoxin-like"/>
    <property type="match status" value="1"/>
</dbReference>
<reference key="1">
    <citation type="journal article" date="2008" name="J. Biol. Chem.">
        <title>Molecular characterization of a novel type of prostamide/prostaglandin F synthase, belonging to the thioredoxin-like superfamily.</title>
        <authorList>
            <person name="Moriuchi H."/>
            <person name="Koda N."/>
            <person name="Okuda-Ashitaka E."/>
            <person name="Daiyasu H."/>
            <person name="Ogasawara K."/>
            <person name="Toh H."/>
            <person name="Ito S."/>
            <person name="Woodward D.F."/>
            <person name="Watanabe K."/>
        </authorList>
    </citation>
    <scope>NUCLEOTIDE SEQUENCE [MRNA]</scope>
    <scope>FUNCTION</scope>
    <scope>CATALYTIC ACTIVITY</scope>
    <scope>BIOPHYSICOCHEMICAL PROPERTIES</scope>
</reference>
<accession>A9CQL8</accession>
<protein>
    <recommendedName>
        <fullName>Prostamide/prostaglandin F synthase</fullName>
        <shortName>Prostamide/PG F synthase</shortName>
        <shortName>Prostamide/PGF synthase</shortName>
        <ecNumber evidence="3">1.11.1.20</ecNumber>
    </recommendedName>
    <alternativeName>
        <fullName>Peroxiredoxin-like 2B</fullName>
    </alternativeName>
</protein>
<gene>
    <name type="primary">PRXL2B</name>
    <name type="synonym">FAM213B</name>
</gene>
<keyword id="KW-0963">Cytoplasm</keyword>
<keyword id="KW-0275">Fatty acid biosynthesis</keyword>
<keyword id="KW-0276">Fatty acid metabolism</keyword>
<keyword id="KW-0444">Lipid biosynthesis</keyword>
<keyword id="KW-0443">Lipid metabolism</keyword>
<keyword id="KW-0521">NADP</keyword>
<keyword id="KW-0560">Oxidoreductase</keyword>
<keyword id="KW-0597">Phosphoprotein</keyword>
<keyword id="KW-0643">Prostaglandin biosynthesis</keyword>
<keyword id="KW-0644">Prostaglandin metabolism</keyword>
<keyword id="KW-1185">Reference proteome</keyword>
<name>PXL2B_PIG</name>
<feature type="chain" id="PRO_0000406970" description="Prostamide/prostaglandin F synthase">
    <location>
        <begin position="1"/>
        <end position="202"/>
    </location>
</feature>
<feature type="modified residue" description="Phosphotyrosine" evidence="2">
    <location>
        <position position="108"/>
    </location>
</feature>
<proteinExistence type="evidence at protein level"/>
<organism>
    <name type="scientific">Sus scrofa</name>
    <name type="common">Pig</name>
    <dbReference type="NCBI Taxonomy" id="9823"/>
    <lineage>
        <taxon>Eukaryota</taxon>
        <taxon>Metazoa</taxon>
        <taxon>Chordata</taxon>
        <taxon>Craniata</taxon>
        <taxon>Vertebrata</taxon>
        <taxon>Euteleostomi</taxon>
        <taxon>Mammalia</taxon>
        <taxon>Eutheria</taxon>
        <taxon>Laurasiatheria</taxon>
        <taxon>Artiodactyla</taxon>
        <taxon>Suina</taxon>
        <taxon>Suidae</taxon>
        <taxon>Sus</taxon>
    </lineage>
</organism>
<comment type="function">
    <text evidence="3">Catalyzes the reduction of prostaglandin-ethanolamide H(2) (prostamide H(2)) to prostamide F(2alpha) with NADPH as proton donor. Also able to reduce prostaglandin H(2) to prostaglandin F(2alpha).</text>
</comment>
<comment type="catalytic activity">
    <reaction evidence="3">
        <text>prostaglandin H2 + [thioredoxin]-dithiol = prostaglandin F2alpha + [thioredoxin]-disulfide</text>
        <dbReference type="Rhea" id="RHEA:28214"/>
        <dbReference type="Rhea" id="RHEA-COMP:10698"/>
        <dbReference type="Rhea" id="RHEA-COMP:10700"/>
        <dbReference type="ChEBI" id="CHEBI:29950"/>
        <dbReference type="ChEBI" id="CHEBI:50058"/>
        <dbReference type="ChEBI" id="CHEBI:57404"/>
        <dbReference type="ChEBI" id="CHEBI:57405"/>
        <dbReference type="EC" id="1.11.1.20"/>
    </reaction>
</comment>
<comment type="catalytic activity">
    <reaction evidence="3">
        <text>prostamide F2alpha + [thioredoxin]-disulfide = prostamide H2 + [thioredoxin]-dithiol</text>
        <dbReference type="Rhea" id="RHEA:26373"/>
        <dbReference type="Rhea" id="RHEA-COMP:10698"/>
        <dbReference type="Rhea" id="RHEA-COMP:10700"/>
        <dbReference type="ChEBI" id="CHEBI:29950"/>
        <dbReference type="ChEBI" id="CHEBI:50058"/>
        <dbReference type="ChEBI" id="CHEBI:53081"/>
        <dbReference type="ChEBI" id="CHEBI:53082"/>
        <dbReference type="EC" id="1.11.1.20"/>
    </reaction>
</comment>
<comment type="biophysicochemical properties">
    <kinetics>
        <KM evidence="3">0.0076 mM for prostamide H(2)</KM>
        <KM evidence="3">0.0069 mM for prostaglandin H(2)</KM>
        <Vmax evidence="3">0.25 umol/min/mg enzyme with prostamide H(2) as substrate</Vmax>
        <Vmax evidence="3">0.685 umol/min/mg enzyme with prostaglandin H(2) as substrate</Vmax>
    </kinetics>
</comment>
<comment type="subcellular location">
    <subcellularLocation>
        <location evidence="1">Cytoplasm</location>
        <location evidence="1">Cytosol</location>
    </subcellularLocation>
</comment>
<comment type="similarity">
    <text evidence="4">Belongs to the peroxiredoxin-like PRXL2 family. Prostamide/prostaglandin F synthase subfamily.</text>
</comment>
<sequence length="202" mass="21547">MSTVDLARVGACVLKHAVTGEAVELRSLWQEQACVVAGLRRFGCMVCRWIARDLSSLKGLLDQHGVRLVGVGPEALGLQEFLDGGYFAGDLYLDESKQFYKELGFKRYSSLSILPAALGKPVRDVAAKAKAAGIQGNLSGDLLQSGGLLVVAKGGDKVLLHFVQKSPGDYAPQESILQALCISAEAACTHQPPQCDEEACSR</sequence>
<evidence type="ECO:0000250" key="1"/>
<evidence type="ECO:0000250" key="2">
    <source>
        <dbReference type="UniProtKB" id="Q8TBF2"/>
    </source>
</evidence>
<evidence type="ECO:0000269" key="3">
    <source>
    </source>
</evidence>
<evidence type="ECO:0000305" key="4"/>